<name>SYE_LACP3</name>
<comment type="function">
    <text evidence="1">Catalyzes the attachment of glutamate to tRNA(Glu) in a two-step reaction: glutamate is first activated by ATP to form Glu-AMP and then transferred to the acceptor end of tRNA(Glu).</text>
</comment>
<comment type="catalytic activity">
    <reaction evidence="1">
        <text>tRNA(Glu) + L-glutamate + ATP = L-glutamyl-tRNA(Glu) + AMP + diphosphate</text>
        <dbReference type="Rhea" id="RHEA:23540"/>
        <dbReference type="Rhea" id="RHEA-COMP:9663"/>
        <dbReference type="Rhea" id="RHEA-COMP:9680"/>
        <dbReference type="ChEBI" id="CHEBI:29985"/>
        <dbReference type="ChEBI" id="CHEBI:30616"/>
        <dbReference type="ChEBI" id="CHEBI:33019"/>
        <dbReference type="ChEBI" id="CHEBI:78442"/>
        <dbReference type="ChEBI" id="CHEBI:78520"/>
        <dbReference type="ChEBI" id="CHEBI:456215"/>
        <dbReference type="EC" id="6.1.1.17"/>
    </reaction>
</comment>
<comment type="subunit">
    <text evidence="1">Monomer.</text>
</comment>
<comment type="subcellular location">
    <subcellularLocation>
        <location evidence="1">Cytoplasm</location>
    </subcellularLocation>
</comment>
<comment type="similarity">
    <text evidence="1">Belongs to the class-I aminoacyl-tRNA synthetase family. Glutamate--tRNA ligase type 1 subfamily.</text>
</comment>
<evidence type="ECO:0000255" key="1">
    <source>
        <dbReference type="HAMAP-Rule" id="MF_00022"/>
    </source>
</evidence>
<accession>Q035R5</accession>
<organism>
    <name type="scientific">Lacticaseibacillus paracasei (strain ATCC 334 / BCRC 17002 / CCUG 31169 / CIP 107868 / KCTC 3260 / NRRL B-441)</name>
    <name type="common">Lactobacillus paracasei</name>
    <dbReference type="NCBI Taxonomy" id="321967"/>
    <lineage>
        <taxon>Bacteria</taxon>
        <taxon>Bacillati</taxon>
        <taxon>Bacillota</taxon>
        <taxon>Bacilli</taxon>
        <taxon>Lactobacillales</taxon>
        <taxon>Lactobacillaceae</taxon>
        <taxon>Lacticaseibacillus</taxon>
    </lineage>
</organism>
<keyword id="KW-0030">Aminoacyl-tRNA synthetase</keyword>
<keyword id="KW-0067">ATP-binding</keyword>
<keyword id="KW-0963">Cytoplasm</keyword>
<keyword id="KW-0436">Ligase</keyword>
<keyword id="KW-0547">Nucleotide-binding</keyword>
<keyword id="KW-0648">Protein biosynthesis</keyword>
<keyword id="KW-1185">Reference proteome</keyword>
<proteinExistence type="inferred from homology"/>
<dbReference type="EC" id="6.1.1.17" evidence="1"/>
<dbReference type="EMBL" id="CP000423">
    <property type="protein sequence ID" value="ABJ71057.1"/>
    <property type="molecule type" value="Genomic_DNA"/>
</dbReference>
<dbReference type="RefSeq" id="WP_003576207.1">
    <property type="nucleotide sequence ID" value="NC_008526.1"/>
</dbReference>
<dbReference type="RefSeq" id="YP_807499.1">
    <property type="nucleotide sequence ID" value="NC_008526.1"/>
</dbReference>
<dbReference type="SMR" id="Q035R5"/>
<dbReference type="STRING" id="321967.LSEI_2313"/>
<dbReference type="PaxDb" id="321967-LSEI_2313"/>
<dbReference type="KEGG" id="lca:LSEI_2313"/>
<dbReference type="PATRIC" id="fig|321967.11.peg.2274"/>
<dbReference type="HOGENOM" id="CLU_015768_6_1_9"/>
<dbReference type="Proteomes" id="UP000001651">
    <property type="component" value="Chromosome"/>
</dbReference>
<dbReference type="GO" id="GO:0005829">
    <property type="term" value="C:cytosol"/>
    <property type="evidence" value="ECO:0007669"/>
    <property type="project" value="TreeGrafter"/>
</dbReference>
<dbReference type="GO" id="GO:0005524">
    <property type="term" value="F:ATP binding"/>
    <property type="evidence" value="ECO:0007669"/>
    <property type="project" value="UniProtKB-UniRule"/>
</dbReference>
<dbReference type="GO" id="GO:0004818">
    <property type="term" value="F:glutamate-tRNA ligase activity"/>
    <property type="evidence" value="ECO:0007669"/>
    <property type="project" value="UniProtKB-UniRule"/>
</dbReference>
<dbReference type="GO" id="GO:0000049">
    <property type="term" value="F:tRNA binding"/>
    <property type="evidence" value="ECO:0007669"/>
    <property type="project" value="InterPro"/>
</dbReference>
<dbReference type="GO" id="GO:0008270">
    <property type="term" value="F:zinc ion binding"/>
    <property type="evidence" value="ECO:0007669"/>
    <property type="project" value="InterPro"/>
</dbReference>
<dbReference type="GO" id="GO:0006424">
    <property type="term" value="P:glutamyl-tRNA aminoacylation"/>
    <property type="evidence" value="ECO:0007669"/>
    <property type="project" value="UniProtKB-UniRule"/>
</dbReference>
<dbReference type="CDD" id="cd00808">
    <property type="entry name" value="GluRS_core"/>
    <property type="match status" value="1"/>
</dbReference>
<dbReference type="FunFam" id="3.40.50.620:FF:000007">
    <property type="entry name" value="Glutamate--tRNA ligase"/>
    <property type="match status" value="1"/>
</dbReference>
<dbReference type="Gene3D" id="1.10.10.350">
    <property type="match status" value="1"/>
</dbReference>
<dbReference type="Gene3D" id="3.40.50.620">
    <property type="entry name" value="HUPs"/>
    <property type="match status" value="1"/>
</dbReference>
<dbReference type="HAMAP" id="MF_00022">
    <property type="entry name" value="Glu_tRNA_synth_type1"/>
    <property type="match status" value="1"/>
</dbReference>
<dbReference type="InterPro" id="IPR045462">
    <property type="entry name" value="aa-tRNA-synth_I_cd-bd"/>
</dbReference>
<dbReference type="InterPro" id="IPR020751">
    <property type="entry name" value="aa-tRNA-synth_I_codon-bd_sub2"/>
</dbReference>
<dbReference type="InterPro" id="IPR001412">
    <property type="entry name" value="aa-tRNA-synth_I_CS"/>
</dbReference>
<dbReference type="InterPro" id="IPR008925">
    <property type="entry name" value="aa_tRNA-synth_I_cd-bd_sf"/>
</dbReference>
<dbReference type="InterPro" id="IPR004527">
    <property type="entry name" value="Glu-tRNA-ligase_bac/mito"/>
</dbReference>
<dbReference type="InterPro" id="IPR000924">
    <property type="entry name" value="Glu/Gln-tRNA-synth"/>
</dbReference>
<dbReference type="InterPro" id="IPR020058">
    <property type="entry name" value="Glu/Gln-tRNA-synth_Ib_cat-dom"/>
</dbReference>
<dbReference type="InterPro" id="IPR049940">
    <property type="entry name" value="GluQ/Sye"/>
</dbReference>
<dbReference type="InterPro" id="IPR033910">
    <property type="entry name" value="GluRS_core"/>
</dbReference>
<dbReference type="InterPro" id="IPR014729">
    <property type="entry name" value="Rossmann-like_a/b/a_fold"/>
</dbReference>
<dbReference type="NCBIfam" id="TIGR00464">
    <property type="entry name" value="gltX_bact"/>
    <property type="match status" value="1"/>
</dbReference>
<dbReference type="PANTHER" id="PTHR43311">
    <property type="entry name" value="GLUTAMATE--TRNA LIGASE"/>
    <property type="match status" value="1"/>
</dbReference>
<dbReference type="PANTHER" id="PTHR43311:SF2">
    <property type="entry name" value="GLUTAMATE--TRNA LIGASE, MITOCHONDRIAL-RELATED"/>
    <property type="match status" value="1"/>
</dbReference>
<dbReference type="Pfam" id="PF19269">
    <property type="entry name" value="Anticodon_2"/>
    <property type="match status" value="1"/>
</dbReference>
<dbReference type="Pfam" id="PF00749">
    <property type="entry name" value="tRNA-synt_1c"/>
    <property type="match status" value="1"/>
</dbReference>
<dbReference type="PRINTS" id="PR00987">
    <property type="entry name" value="TRNASYNTHGLU"/>
</dbReference>
<dbReference type="SUPFAM" id="SSF48163">
    <property type="entry name" value="An anticodon-binding domain of class I aminoacyl-tRNA synthetases"/>
    <property type="match status" value="1"/>
</dbReference>
<dbReference type="SUPFAM" id="SSF52374">
    <property type="entry name" value="Nucleotidylyl transferase"/>
    <property type="match status" value="1"/>
</dbReference>
<dbReference type="PROSITE" id="PS00178">
    <property type="entry name" value="AA_TRNA_LIGASE_I"/>
    <property type="match status" value="1"/>
</dbReference>
<feature type="chain" id="PRO_1000001911" description="Glutamate--tRNA ligase">
    <location>
        <begin position="1"/>
        <end position="497"/>
    </location>
</feature>
<feature type="short sequence motif" description="'HIGH' region" evidence="1">
    <location>
        <begin position="12"/>
        <end position="22"/>
    </location>
</feature>
<feature type="short sequence motif" description="'KMSKS' region" evidence="1">
    <location>
        <begin position="259"/>
        <end position="263"/>
    </location>
</feature>
<feature type="binding site" evidence="1">
    <location>
        <position position="262"/>
    </location>
    <ligand>
        <name>ATP</name>
        <dbReference type="ChEBI" id="CHEBI:30616"/>
    </ligand>
</feature>
<protein>
    <recommendedName>
        <fullName evidence="1">Glutamate--tRNA ligase</fullName>
        <ecNumber evidence="1">6.1.1.17</ecNumber>
    </recommendedName>
    <alternativeName>
        <fullName evidence="1">Glutamyl-tRNA synthetase</fullName>
        <shortName evidence="1">GluRS</shortName>
    </alternativeName>
</protein>
<sequence>MADRPIRVRYAPSPTGHLHIGNARTALFNYLFARHNNGTLVLRIEDTDTKRNVADGEKSQMENLHWLGIDWDEGPDKGGDFGPYRQSERKDIYDKLIKQLVDKGFAYESYRTEEELKADREAQKARHEMPHYEYEYEGMTDAEKADAIAAAKAKGLEPVIRFHIPMDKTYEWDDIVKGKISIDANTLGGDFVIQKRDGMPTYNFAVVVDDHMMQISHVLRGDDHIANTPKQLAIYDAFGWEPPIFGHMTLIINGATGKKLSKRDETVLQFIEQYRELGYLPDAMFNFITLLGWSPVGEDEIFTKKEFIKQFDPKRLSKSPARFDQKKLEWVNNQYIKAKQKTNPNELMSLSLANLIEDGKIHSDPDPKTIEWARQLISLYTDQMSYTAQISKLADIFFDKATDLTDDERKELADDNAKPVIEAFAKKIRALDTFDAYSIGGIVNEVKQETKVKGRKLYMPIRIAATLRMHGPQLAETIELMGRDQVLKNVDLVTGQL</sequence>
<reference key="1">
    <citation type="journal article" date="2006" name="Proc. Natl. Acad. Sci. U.S.A.">
        <title>Comparative genomics of the lactic acid bacteria.</title>
        <authorList>
            <person name="Makarova K.S."/>
            <person name="Slesarev A."/>
            <person name="Wolf Y.I."/>
            <person name="Sorokin A."/>
            <person name="Mirkin B."/>
            <person name="Koonin E.V."/>
            <person name="Pavlov A."/>
            <person name="Pavlova N."/>
            <person name="Karamychev V."/>
            <person name="Polouchine N."/>
            <person name="Shakhova V."/>
            <person name="Grigoriev I."/>
            <person name="Lou Y."/>
            <person name="Rohksar D."/>
            <person name="Lucas S."/>
            <person name="Huang K."/>
            <person name="Goodstein D.M."/>
            <person name="Hawkins T."/>
            <person name="Plengvidhya V."/>
            <person name="Welker D."/>
            <person name="Hughes J."/>
            <person name="Goh Y."/>
            <person name="Benson A."/>
            <person name="Baldwin K."/>
            <person name="Lee J.-H."/>
            <person name="Diaz-Muniz I."/>
            <person name="Dosti B."/>
            <person name="Smeianov V."/>
            <person name="Wechter W."/>
            <person name="Barabote R."/>
            <person name="Lorca G."/>
            <person name="Altermann E."/>
            <person name="Barrangou R."/>
            <person name="Ganesan B."/>
            <person name="Xie Y."/>
            <person name="Rawsthorne H."/>
            <person name="Tamir D."/>
            <person name="Parker C."/>
            <person name="Breidt F."/>
            <person name="Broadbent J.R."/>
            <person name="Hutkins R."/>
            <person name="O'Sullivan D."/>
            <person name="Steele J."/>
            <person name="Unlu G."/>
            <person name="Saier M.H. Jr."/>
            <person name="Klaenhammer T."/>
            <person name="Richardson P."/>
            <person name="Kozyavkin S."/>
            <person name="Weimer B.C."/>
            <person name="Mills D.A."/>
        </authorList>
    </citation>
    <scope>NUCLEOTIDE SEQUENCE [LARGE SCALE GENOMIC DNA]</scope>
    <source>
        <strain>ATCC 334 / BCRC 17002 / CCUG 31169 / CIP 107868 / KCTC 3260 / NRRL B-441</strain>
    </source>
</reference>
<gene>
    <name evidence="1" type="primary">gltX</name>
    <name type="ordered locus">LSEI_2313</name>
</gene>